<proteinExistence type="evidence at protein level"/>
<comment type="function">
    <text evidence="1">Participates in the assembly of the infectious particles by decorating the outer surface of the capsid shell and thus forming a layer between the capsid and the tegument. Complexes composed of the major capsid protein and small capsomere-interacting protein/SCP assemble together in the host cytoplasm and are translocated to the nucleus, where they accumulate and participate in capsid assembly.</text>
</comment>
<comment type="subunit">
    <text evidence="1">Interacts with the major capsid protein/MCP.</text>
</comment>
<comment type="subcellular location">
    <subcellularLocation>
        <location evidence="1">Virion</location>
    </subcellularLocation>
    <subcellularLocation>
        <location evidence="1">Host nucleus</location>
    </subcellularLocation>
</comment>
<comment type="similarity">
    <text evidence="1">Belongs to the herpesviridae small capsomere-interacting protein family.</text>
</comment>
<organismHost>
    <name type="scientific">Homo sapiens</name>
    <name type="common">Human</name>
    <dbReference type="NCBI Taxonomy" id="9606"/>
</organismHost>
<dbReference type="EMBL" id="Z86099">
    <property type="protein sequence ID" value="CAB06721.1"/>
    <property type="molecule type" value="Genomic_DNA"/>
</dbReference>
<dbReference type="RefSeq" id="YP_009137187.1">
    <property type="nucleotide sequence ID" value="NC_001798.2"/>
</dbReference>
<dbReference type="PDB" id="5ZZ8">
    <property type="method" value="EM"/>
    <property type="resolution" value="3.75 A"/>
    <property type="chains" value="b/c/d/e/f/g/h/i/j/k/l/m/n/o/p=1-112"/>
</dbReference>
<dbReference type="PDB" id="6M6G">
    <property type="method" value="EM"/>
    <property type="resolution" value="5.39 A"/>
    <property type="chains" value="G/M/Q/T/U/V=1-112"/>
</dbReference>
<dbReference type="PDB" id="6M6H">
    <property type="method" value="EM"/>
    <property type="resolution" value="4.50 A"/>
    <property type="chains" value="J/K/L/M/N/O=1-112"/>
</dbReference>
<dbReference type="PDBsum" id="5ZZ8"/>
<dbReference type="PDBsum" id="6M6G"/>
<dbReference type="PDBsum" id="6M6H"/>
<dbReference type="EMDB" id="EMD-6976"/>
<dbReference type="SMR" id="P89458"/>
<dbReference type="DNASU" id="24271457"/>
<dbReference type="GeneID" id="24271457"/>
<dbReference type="KEGG" id="vg:24271457"/>
<dbReference type="Proteomes" id="UP000001874">
    <property type="component" value="Segment"/>
</dbReference>
<dbReference type="GO" id="GO:0042025">
    <property type="term" value="C:host cell nucleus"/>
    <property type="evidence" value="ECO:0007669"/>
    <property type="project" value="UniProtKB-SubCell"/>
</dbReference>
<dbReference type="GO" id="GO:0019028">
    <property type="term" value="C:viral capsid"/>
    <property type="evidence" value="ECO:0007669"/>
    <property type="project" value="UniProtKB-UniRule"/>
</dbReference>
<dbReference type="GO" id="GO:0016032">
    <property type="term" value="P:viral process"/>
    <property type="evidence" value="ECO:0007669"/>
    <property type="project" value="UniProtKB-UniRule"/>
</dbReference>
<dbReference type="HAMAP" id="MF_04020">
    <property type="entry name" value="HSV_SCP_alphahv"/>
    <property type="match status" value="1"/>
</dbReference>
<dbReference type="InterPro" id="IPR007584">
    <property type="entry name" value="Herpes_UL35"/>
</dbReference>
<dbReference type="Pfam" id="PF04496">
    <property type="entry name" value="Herpes_UL35"/>
    <property type="match status" value="1"/>
</dbReference>
<accession>P89458</accession>
<keyword id="KW-0002">3D-structure</keyword>
<keyword id="KW-0167">Capsid protein</keyword>
<keyword id="KW-1048">Host nucleus</keyword>
<keyword id="KW-1185">Reference proteome</keyword>
<keyword id="KW-0946">Virion</keyword>
<feature type="chain" id="PRO_0000406189" description="Small capsomere-interacting protein">
    <location>
        <begin position="1"/>
        <end position="112"/>
    </location>
</feature>
<name>SCP_HHV2H</name>
<sequence>MAAPQFHRPSTITADNVRALGMRGLVLATNNAQFIMDNSYPHPHGTQGAVREFLRGQAAALTDLGVTHANNTFAPQPMFAGDAAAEWLRPSFGLKRTYSPFVVRDPKTPSTP</sequence>
<gene>
    <name evidence="1" type="primary">SCP</name>
    <name type="ordered locus">UL35</name>
</gene>
<protein>
    <recommendedName>
        <fullName evidence="1">Small capsomere-interacting protein</fullName>
    </recommendedName>
</protein>
<organism>
    <name type="scientific">Human herpesvirus 2 (strain HG52)</name>
    <name type="common">HHV-2</name>
    <name type="synonym">Human herpes simplex virus 2</name>
    <dbReference type="NCBI Taxonomy" id="10315"/>
    <lineage>
        <taxon>Viruses</taxon>
        <taxon>Duplodnaviria</taxon>
        <taxon>Heunggongvirae</taxon>
        <taxon>Peploviricota</taxon>
        <taxon>Herviviricetes</taxon>
        <taxon>Herpesvirales</taxon>
        <taxon>Orthoherpesviridae</taxon>
        <taxon>Alphaherpesvirinae</taxon>
        <taxon>Simplexvirus</taxon>
        <taxon>Simplexvirus humanalpha2</taxon>
        <taxon>Human herpesvirus 2</taxon>
    </lineage>
</organism>
<evidence type="ECO:0000255" key="1">
    <source>
        <dbReference type="HAMAP-Rule" id="MF_04020"/>
    </source>
</evidence>
<reference key="1">
    <citation type="journal article" date="1991" name="J. Gen. Virol.">
        <title>Comparative sequence analysis of the long repeat regions and adjoining parts of the long unique regions in the genomes of herpes simplex viruses types 1 and 2.</title>
        <authorList>
            <person name="McGeoch D.J."/>
            <person name="Cunningham C."/>
            <person name="McIntyre G."/>
            <person name="Dolan A."/>
        </authorList>
    </citation>
    <scope>NUCLEOTIDE SEQUENCE [LARGE SCALE GENOMIC DNA]</scope>
</reference>
<reference key="2">
    <citation type="journal article" date="2001" name="J. Gen. Virol.">
        <title>The UL14 protein of herpes simplex virus type 2 translocates the minor capsid protein VP26 and the DNA cleavage and packaging UL33 protein into the nucleus of coexpressing cells.</title>
        <authorList>
            <person name="Yamauchi Y."/>
            <person name="Wada K."/>
            <person name="Goshima F."/>
            <person name="Takakuwa H."/>
            <person name="Daikoku T."/>
            <person name="Yamada M."/>
            <person name="Nishiyama Y."/>
        </authorList>
    </citation>
    <scope>SUBCELLULAR LOCATION</scope>
</reference>